<proteinExistence type="inferred from homology"/>
<keyword id="KW-0325">Glycoprotein</keyword>
<keyword id="KW-0472">Membrane</keyword>
<keyword id="KW-0808">Transferase</keyword>
<keyword id="KW-0812">Transmembrane</keyword>
<keyword id="KW-1133">Transmembrane helix</keyword>
<name>ALT7_ALTAL</name>
<sequence length="432" mass="49152">MFRPDLDDIPALGSETSSLDNTVENGNYRVKLWRDKSGIRSPPSTFCTWFKQYQIGLSLGSLLLLILMFTCLPYYDNVSGTYTRGRDDLAFIFSGVVLFTALRAISMIYLLEPLARLCGVHKKLMVRFTEQGWLVIHHSLFWTTGMYINYNSEYWMDLDGVWSGFPERTMTGLTKGYYLLQLAFWLQQIVVVNFEKRRKDYSQMLTHHLITSVLLATSYSYYQTKVGNVILCLVDIVDVLFAFAKLLKYLGFQYACDVAFCVFLASWLVARHGLYLLVCWSIFTILPTVMPYGCYDTISGNRLSEFPADGGNEIMREVLQAFRDPGGPVCFNSRIGWAFLGLLVGLQVLMLIWLGMILKVAYKVFQGEGADDTRSDSEESGYGTSDHEGDCYGAQAGNPKVIRQFVASREKVHIEQAENQGLHLRQQKRSAR</sequence>
<evidence type="ECO:0000250" key="1">
    <source>
        <dbReference type="UniProtKB" id="W7LKY5"/>
    </source>
</evidence>
<evidence type="ECO:0000255" key="2"/>
<evidence type="ECO:0000255" key="3">
    <source>
        <dbReference type="PROSITE-ProRule" id="PRU00205"/>
    </source>
</evidence>
<evidence type="ECO:0000255" key="4">
    <source>
        <dbReference type="PROSITE-ProRule" id="PRU00498"/>
    </source>
</evidence>
<evidence type="ECO:0000256" key="5">
    <source>
        <dbReference type="SAM" id="MobiDB-lite"/>
    </source>
</evidence>
<evidence type="ECO:0000269" key="6">
    <source>
    </source>
</evidence>
<evidence type="ECO:0000269" key="7">
    <source>
    </source>
</evidence>
<evidence type="ECO:0000269" key="8">
    <source>
    </source>
</evidence>
<evidence type="ECO:0000269" key="9">
    <source ref="6"/>
</evidence>
<evidence type="ECO:0000303" key="10">
    <source ref="6"/>
</evidence>
<evidence type="ECO:0000305" key="11"/>
<evidence type="ECO:0000305" key="12">
    <source>
    </source>
</evidence>
<evidence type="ECO:0000305" key="13">
    <source ref="6"/>
</evidence>
<protein>
    <recommendedName>
        <fullName evidence="10">Sphingosine N-acyltransferase-like protein ALT7</fullName>
        <ecNumber evidence="1">2.3.1.-</ecNumber>
    </recommendedName>
    <alternativeName>
        <fullName evidence="10">AAL-toxin biosynthesis cluster protein 7</fullName>
    </alternativeName>
</protein>
<reference key="1">
    <citation type="submission" date="2011-08" db="EMBL/GenBank/DDBJ databases">
        <title>Functional analysis of ALT7.</title>
        <authorList>
            <person name="Kheder A."/>
            <person name="Akagi Y."/>
            <person name="Kodama M."/>
        </authorList>
    </citation>
    <scope>NUCLEOTIDE SEQUENCE [GENOMIC DNA]</scope>
    <source>
        <strain>As-27</strain>
    </source>
</reference>
<reference key="2">
    <citation type="submission" date="2014-06" db="EMBL/GenBank/DDBJ databases">
        <title>AAL-toxin biosynthetic genes cluster in the tomato pathotype of Alternaria alternata.</title>
        <authorList>
            <person name="Akagi Y."/>
            <person name="Akamatsu H."/>
            <person name="Takao K."/>
            <person name="Tsuge T."/>
            <person name="Kodama M."/>
        </authorList>
    </citation>
    <scope>NUCLEOTIDE SEQUENCE [GENOMIC DNA]</scope>
    <source>
        <strain>As-27</strain>
    </source>
</reference>
<reference key="3">
    <citation type="journal article" date="2008" name="J. Nat. Prod.">
        <title>Functional complementation of fumonisin biosynthesis in FUM1-disrupted fusarium verticillioides by the AAL-toxin polyketide synthase gene ALT1 from Alternaria alternata f. sp. Lycopersici.</title>
        <authorList>
            <person name="Zhu X."/>
            <person name="Vogeler C."/>
            <person name="Du L."/>
        </authorList>
    </citation>
    <scope>FUNCTION</scope>
</reference>
<reference key="4">
    <citation type="journal article" date="2009" name="Eukaryot. Cell">
        <title>Horizontal chromosome transfer, a mechanism for the evolution and differentiation of a plant-pathogenic fungus.</title>
        <authorList>
            <person name="Akagi Y."/>
            <person name="Akamatsu H."/>
            <person name="Otani H."/>
            <person name="Kodama M."/>
        </authorList>
    </citation>
    <scope>FUNCTION</scope>
</reference>
<reference key="5">
    <citation type="journal article" date="2009" name="J. Nat. Prod.">
        <title>Introduction of the AAL-toxin polyketide synthase gene ALT1 into FUM1-disrupted Fusarium verticillioides produces metabolites with the fumonisin methylation pattern.</title>
        <authorList>
            <person name="Li Y."/>
            <person name="Shen Y."/>
            <person name="Zhu X."/>
            <person name="Du L."/>
        </authorList>
    </citation>
    <scope>FUNCTION</scope>
</reference>
<reference key="6">
    <citation type="journal article" date="2012" name="J. Plant Pathol. Microbiol.">
        <title>Functional analysis of the ceramide synthase gene ALT7, a homolog of the disease resistance gene Asc1, in the plant pathogen Alternaria alternata.</title>
        <authorList>
            <person name="Kheder A.A."/>
            <person name="Akagi Y."/>
            <person name="Tsuge T."/>
            <person name="Kodama M."/>
        </authorList>
    </citation>
    <scope>DISRUPTION PHENOTYPE</scope>
    <scope>FUNCTION</scope>
</reference>
<comment type="function">
    <text evidence="6 7 8 9 12">Sphingosine N-acyltransferase-like protein; part of the gene cluster that mediates the biosynthesis of the host-selective toxins (HSTs) AAL-toxins, sphinganine-analog mycotoxins responsible for Alternaria stem canker on tomato by the tomato pathotype (PubMed:18435561, PubMed:19449880, PubMed:19749175). The biosynthesis starts with the polyketide synthase ALT1-catalyzed C-16 carbon chain assembly from one starter acetyl-CoA unit with malonyl-CoA extender units (PubMed:18435561, PubMed:19449880). ALT1 also selectively transfers methyl groups at the first and the third cycle of chain elongation for AAL toxin (PubMed:19449880). The C-16 polyketide chain is released from the enzyme by a nucleophilic attack of a carbanion, which is derived from R-carbon of glycin by decarboxylation, on the carbonyl carbon of polyketide acyl chain (Probable). This step is probably catalyzed by a pyridoxal 5'-phosphate-dependent aminoacyl transferase ALT4 (Probable). The respective functions of the other enzymes encoded by the cluster have still to be elucidated (Probable). The sphingosine N-acyltransferase-like protein ALT7 seems not to act as a resistance/self-tolerance factor against the toxin in the toxin biosynthetic gene cluster, contrary to what is expected (Ref.6).</text>
</comment>
<comment type="pathway">
    <text evidence="13">Mycotoxin biosynthesis.</text>
</comment>
<comment type="subcellular location">
    <subcellularLocation>
        <location evidence="2">Membrane</location>
        <topology evidence="2">Multi-pass membrane protein</topology>
    </subcellularLocation>
</comment>
<comment type="disruption phenotype">
    <text evidence="9">Does not cause any detectable defects in the vegetative and reproductive properties of the toxin-producing pathogen. The deletion of ALT7 has no deleterious effect on the toxin-producing pathogen, indicating that the gene does not act as a resistance/self-tolerance factor against the toxin in the toxin biosynthetic gene cluster.</text>
</comment>
<comment type="miscellaneous">
    <text evidence="8">Gene clusters encoding host-selective toxins (HSTs) are localized on conditionally dispensable chromosomes (CDCs), also called supernumerary chromosomes, where they are present in multiple copies. The CDCs are not essential for saprophytic growth but controls host-selective pathogenicity.</text>
</comment>
<comment type="similarity">
    <text evidence="11">Belongs to the sphingosine N-acyltransferase family.</text>
</comment>
<dbReference type="EC" id="2.3.1.-" evidence="1"/>
<dbReference type="EMBL" id="AB666460">
    <property type="protein sequence ID" value="BAK64384.1"/>
    <property type="molecule type" value="Genomic_DNA"/>
</dbReference>
<dbReference type="EMBL" id="AB969680">
    <property type="protein sequence ID" value="BBG74271.1"/>
    <property type="molecule type" value="Genomic_DNA"/>
</dbReference>
<dbReference type="SMR" id="G1UJF5"/>
<dbReference type="GlyCosmos" id="G1UJF5">
    <property type="glycosylation" value="1 site, No reported glycans"/>
</dbReference>
<dbReference type="VEuPathDB" id="FungiDB:CC77DRAFT_944241"/>
<dbReference type="GO" id="GO:0016020">
    <property type="term" value="C:membrane"/>
    <property type="evidence" value="ECO:0007669"/>
    <property type="project" value="UniProtKB-SubCell"/>
</dbReference>
<dbReference type="GO" id="GO:0050291">
    <property type="term" value="F:sphingosine N-acyltransferase activity"/>
    <property type="evidence" value="ECO:0007669"/>
    <property type="project" value="InterPro"/>
</dbReference>
<dbReference type="GO" id="GO:0046513">
    <property type="term" value="P:ceramide biosynthetic process"/>
    <property type="evidence" value="ECO:0007669"/>
    <property type="project" value="InterPro"/>
</dbReference>
<dbReference type="InterPro" id="IPR016439">
    <property type="entry name" value="Lag1/Lac1-like"/>
</dbReference>
<dbReference type="InterPro" id="IPR006634">
    <property type="entry name" value="TLC-dom"/>
</dbReference>
<dbReference type="PANTHER" id="PTHR12560:SF0">
    <property type="entry name" value="LD18904P"/>
    <property type="match status" value="1"/>
</dbReference>
<dbReference type="PANTHER" id="PTHR12560">
    <property type="entry name" value="LONGEVITY ASSURANCE FACTOR 1 LAG1"/>
    <property type="match status" value="1"/>
</dbReference>
<dbReference type="Pfam" id="PF03798">
    <property type="entry name" value="TRAM_LAG1_CLN8"/>
    <property type="match status" value="1"/>
</dbReference>
<dbReference type="SMART" id="SM00724">
    <property type="entry name" value="TLC"/>
    <property type="match status" value="1"/>
</dbReference>
<dbReference type="PROSITE" id="PS50922">
    <property type="entry name" value="TLC"/>
    <property type="match status" value="1"/>
</dbReference>
<organism>
    <name type="scientific">Alternaria alternata</name>
    <name type="common">Alternaria rot fungus</name>
    <name type="synonym">Torula alternata</name>
    <dbReference type="NCBI Taxonomy" id="5599"/>
    <lineage>
        <taxon>Eukaryota</taxon>
        <taxon>Fungi</taxon>
        <taxon>Dikarya</taxon>
        <taxon>Ascomycota</taxon>
        <taxon>Pezizomycotina</taxon>
        <taxon>Dothideomycetes</taxon>
        <taxon>Pleosporomycetidae</taxon>
        <taxon>Pleosporales</taxon>
        <taxon>Pleosporineae</taxon>
        <taxon>Pleosporaceae</taxon>
        <taxon>Alternaria</taxon>
        <taxon>Alternaria sect. Alternaria</taxon>
        <taxon>Alternaria alternata complex</taxon>
    </lineage>
</organism>
<feature type="chain" id="PRO_0000449860" description="Sphingosine N-acyltransferase-like protein ALT7">
    <location>
        <begin position="1"/>
        <end position="432"/>
    </location>
</feature>
<feature type="transmembrane region" description="Helical" evidence="2">
    <location>
        <begin position="55"/>
        <end position="75"/>
    </location>
</feature>
<feature type="transmembrane region" description="Helical" evidence="2">
    <location>
        <begin position="91"/>
        <end position="111"/>
    </location>
</feature>
<feature type="transmembrane region" description="Helical" evidence="2">
    <location>
        <begin position="128"/>
        <end position="148"/>
    </location>
</feature>
<feature type="transmembrane region" description="Helical" evidence="2">
    <location>
        <begin position="172"/>
        <end position="192"/>
    </location>
</feature>
<feature type="transmembrane region" description="Helical" evidence="2">
    <location>
        <begin position="226"/>
        <end position="246"/>
    </location>
</feature>
<feature type="transmembrane region" description="Helical" evidence="2">
    <location>
        <begin position="250"/>
        <end position="270"/>
    </location>
</feature>
<feature type="transmembrane region" description="Helical" evidence="2">
    <location>
        <begin position="273"/>
        <end position="293"/>
    </location>
</feature>
<feature type="transmembrane region" description="Helical" evidence="2">
    <location>
        <begin position="338"/>
        <end position="358"/>
    </location>
</feature>
<feature type="domain" description="TLC" evidence="3">
    <location>
        <begin position="123"/>
        <end position="366"/>
    </location>
</feature>
<feature type="region of interest" description="Disordered" evidence="5">
    <location>
        <begin position="370"/>
        <end position="395"/>
    </location>
</feature>
<feature type="glycosylation site" description="N-linked (GlcNAc...) asparagine" evidence="4">
    <location>
        <position position="77"/>
    </location>
</feature>
<accession>G1UJF5</accession>
<gene>
    <name evidence="10" type="primary">ALT7</name>
</gene>